<name>RL36_NITOC</name>
<feature type="chain" id="PRO_0000302255" description="Large ribosomal subunit protein bL36">
    <location>
        <begin position="1"/>
        <end position="37"/>
    </location>
</feature>
<evidence type="ECO:0000255" key="1">
    <source>
        <dbReference type="HAMAP-Rule" id="MF_00251"/>
    </source>
</evidence>
<evidence type="ECO:0000305" key="2"/>
<gene>
    <name evidence="1" type="primary">rpmJ</name>
    <name type="ordered locus">Noc_2304</name>
</gene>
<comment type="similarity">
    <text evidence="1">Belongs to the bacterial ribosomal protein bL36 family.</text>
</comment>
<accession>Q3J8T4</accession>
<reference key="1">
    <citation type="journal article" date="2006" name="Appl. Environ. Microbiol.">
        <title>Complete genome sequence of the marine, chemolithoautotrophic, ammonia-oxidizing bacterium Nitrosococcus oceani ATCC 19707.</title>
        <authorList>
            <person name="Klotz M.G."/>
            <person name="Arp D.J."/>
            <person name="Chain P.S.G."/>
            <person name="El-Sheikh A.F."/>
            <person name="Hauser L.J."/>
            <person name="Hommes N.G."/>
            <person name="Larimer F.W."/>
            <person name="Malfatti S.A."/>
            <person name="Norton J.M."/>
            <person name="Poret-Peterson A.T."/>
            <person name="Vergez L.M."/>
            <person name="Ward B.B."/>
        </authorList>
    </citation>
    <scope>NUCLEOTIDE SEQUENCE [LARGE SCALE GENOMIC DNA]</scope>
    <source>
        <strain>ATCC 19707 / BCRC 17464 / JCM 30415 / NCIMB 11848 / C-107</strain>
    </source>
</reference>
<protein>
    <recommendedName>
        <fullName evidence="1">Large ribosomal subunit protein bL36</fullName>
    </recommendedName>
    <alternativeName>
        <fullName evidence="2">50S ribosomal protein L36</fullName>
    </alternativeName>
</protein>
<organism>
    <name type="scientific">Nitrosococcus oceani (strain ATCC 19707 / BCRC 17464 / JCM 30415 / NCIMB 11848 / C-107)</name>
    <dbReference type="NCBI Taxonomy" id="323261"/>
    <lineage>
        <taxon>Bacteria</taxon>
        <taxon>Pseudomonadati</taxon>
        <taxon>Pseudomonadota</taxon>
        <taxon>Gammaproteobacteria</taxon>
        <taxon>Chromatiales</taxon>
        <taxon>Chromatiaceae</taxon>
        <taxon>Nitrosococcus</taxon>
    </lineage>
</organism>
<keyword id="KW-1185">Reference proteome</keyword>
<keyword id="KW-0687">Ribonucleoprotein</keyword>
<keyword id="KW-0689">Ribosomal protein</keyword>
<sequence>MKVRASVKKVCRHCKVVRRKGVVRVICKDARHKQRQG</sequence>
<dbReference type="EMBL" id="CP000127">
    <property type="protein sequence ID" value="ABA58762.1"/>
    <property type="molecule type" value="Genomic_DNA"/>
</dbReference>
<dbReference type="RefSeq" id="WP_011330914.1">
    <property type="nucleotide sequence ID" value="NC_007484.1"/>
</dbReference>
<dbReference type="SMR" id="Q3J8T4"/>
<dbReference type="FunCoup" id="Q3J8T4">
    <property type="interactions" value="233"/>
</dbReference>
<dbReference type="STRING" id="323261.Noc_2304"/>
<dbReference type="KEGG" id="noc:Noc_2304"/>
<dbReference type="eggNOG" id="COG0257">
    <property type="taxonomic scope" value="Bacteria"/>
</dbReference>
<dbReference type="HOGENOM" id="CLU_135723_6_2_6"/>
<dbReference type="InParanoid" id="Q3J8T4"/>
<dbReference type="Proteomes" id="UP000006838">
    <property type="component" value="Chromosome"/>
</dbReference>
<dbReference type="GO" id="GO:0005737">
    <property type="term" value="C:cytoplasm"/>
    <property type="evidence" value="ECO:0007669"/>
    <property type="project" value="UniProtKB-ARBA"/>
</dbReference>
<dbReference type="GO" id="GO:1990904">
    <property type="term" value="C:ribonucleoprotein complex"/>
    <property type="evidence" value="ECO:0007669"/>
    <property type="project" value="UniProtKB-KW"/>
</dbReference>
<dbReference type="GO" id="GO:0005840">
    <property type="term" value="C:ribosome"/>
    <property type="evidence" value="ECO:0007669"/>
    <property type="project" value="UniProtKB-KW"/>
</dbReference>
<dbReference type="GO" id="GO:0003735">
    <property type="term" value="F:structural constituent of ribosome"/>
    <property type="evidence" value="ECO:0007669"/>
    <property type="project" value="InterPro"/>
</dbReference>
<dbReference type="GO" id="GO:0006412">
    <property type="term" value="P:translation"/>
    <property type="evidence" value="ECO:0007669"/>
    <property type="project" value="UniProtKB-UniRule"/>
</dbReference>
<dbReference type="HAMAP" id="MF_00251">
    <property type="entry name" value="Ribosomal_bL36"/>
    <property type="match status" value="1"/>
</dbReference>
<dbReference type="InterPro" id="IPR000473">
    <property type="entry name" value="Ribosomal_bL36"/>
</dbReference>
<dbReference type="InterPro" id="IPR035977">
    <property type="entry name" value="Ribosomal_bL36_sp"/>
</dbReference>
<dbReference type="NCBIfam" id="TIGR01022">
    <property type="entry name" value="rpmJ_bact"/>
    <property type="match status" value="1"/>
</dbReference>
<dbReference type="PANTHER" id="PTHR42888">
    <property type="entry name" value="50S RIBOSOMAL PROTEIN L36, CHLOROPLASTIC"/>
    <property type="match status" value="1"/>
</dbReference>
<dbReference type="PANTHER" id="PTHR42888:SF1">
    <property type="entry name" value="LARGE RIBOSOMAL SUBUNIT PROTEIN BL36C"/>
    <property type="match status" value="1"/>
</dbReference>
<dbReference type="Pfam" id="PF00444">
    <property type="entry name" value="Ribosomal_L36"/>
    <property type="match status" value="1"/>
</dbReference>
<dbReference type="SUPFAM" id="SSF57840">
    <property type="entry name" value="Ribosomal protein L36"/>
    <property type="match status" value="1"/>
</dbReference>
<dbReference type="PROSITE" id="PS00828">
    <property type="entry name" value="RIBOSOMAL_L36"/>
    <property type="match status" value="1"/>
</dbReference>
<proteinExistence type="inferred from homology"/>